<proteinExistence type="evidence at protein level"/>
<name>METAS_PELHB</name>
<keyword id="KW-0012">Acyltransferase</keyword>
<keyword id="KW-0028">Amino-acid biosynthesis</keyword>
<keyword id="KW-0963">Cytoplasm</keyword>
<keyword id="KW-0486">Methionine biosynthesis</keyword>
<keyword id="KW-1185">Reference proteome</keyword>
<keyword id="KW-0808">Transferase</keyword>
<sequence>MPIRIPDQLPARKTLETEGVVVMDQSRSARQDIRPLQFGLLNLMPNKQRTETQFARLIASTPLQIDLTLVRVADPLSKSTPEDYLQNFYSTWEDVRAKKFDGFVVTGAPIANMPFEDVRYWPEMLEIMDWTQTNVHHTMFICWGAQAALHHLHGVKRYRMEHKAFGVYRHKVLDTRHPFLRGFSDDLAVPVSRYNDIDRQSLSPDLDILIDSDEVGICMLDDRKYRAAYMLNHLEYDNTSLADEYHRDIEAGLDTPLPVNLFPGNDPSRMPENRWRSHAHLLFQNWINEIYQTTPYELEKVGTGEW</sequence>
<gene>
    <name evidence="1 3" type="primary">metAS</name>
    <name evidence="4" type="ordered locus">KKY_1885</name>
</gene>
<reference key="1">
    <citation type="journal article" date="2012" name="J. Bacteriol.">
        <title>Complete genome sequence of Pelagibacterium halotolerans B2T.</title>
        <authorList>
            <person name="Huo Y.Y."/>
            <person name="Cheng H."/>
            <person name="Han X.F."/>
            <person name="Jiang X.W."/>
            <person name="Sun C."/>
            <person name="Zhang X.Q."/>
            <person name="Zhu X.F."/>
            <person name="Liu Y.F."/>
            <person name="Li P.F."/>
            <person name="Ni P.X."/>
            <person name="Wu M."/>
        </authorList>
    </citation>
    <scope>NUCLEOTIDE SEQUENCE [LARGE SCALE GENOMIC DNA]</scope>
    <source>
        <strain>DSM 22347 / JCM 15775 / CGMCC 1.7692 / B2</strain>
    </source>
</reference>
<reference key="2">
    <citation type="journal article" date="2017" name="Nat. Chem. Biol.">
        <title>Parallel evolution of non-homologous isofunctional enzymes in methionine biosynthesis.</title>
        <authorList>
            <person name="Bastard K."/>
            <person name="Perret A."/>
            <person name="Mariage A."/>
            <person name="Bessonnet T."/>
            <person name="Pinet-Turpault A."/>
            <person name="Petit J.L."/>
            <person name="Darii E."/>
            <person name="Bazire P."/>
            <person name="Vergne-Vaxelaire C."/>
            <person name="Brewee C."/>
            <person name="Debard A."/>
            <person name="Pellouin V."/>
            <person name="Besnard-Gonnet M."/>
            <person name="Artiguenave F."/>
            <person name="Medigue C."/>
            <person name="Vallenet D."/>
            <person name="Danchin A."/>
            <person name="Zaparucha A."/>
            <person name="Weissenbach J."/>
            <person name="Salanoubat M."/>
            <person name="de Berardinis V."/>
        </authorList>
    </citation>
    <scope>FUNCTION</scope>
    <scope>CATALYTIC ACTIVITY</scope>
</reference>
<organism>
    <name type="scientific">Pelagibacterium halotolerans (strain DSM 22347 / JCM 15775 / CGMCC 1.7692 / B2)</name>
    <dbReference type="NCBI Taxonomy" id="1082931"/>
    <lineage>
        <taxon>Bacteria</taxon>
        <taxon>Pseudomonadati</taxon>
        <taxon>Pseudomonadota</taxon>
        <taxon>Alphaproteobacteria</taxon>
        <taxon>Hyphomicrobiales</taxon>
        <taxon>Devosiaceae</taxon>
        <taxon>Pelagibacterium</taxon>
    </lineage>
</organism>
<accession>G4RES5</accession>
<protein>
    <recommendedName>
        <fullName evidence="1">Homoserine O-succinyltransferase</fullName>
        <shortName evidence="1 3">HST</shortName>
        <ecNumber evidence="1 2">2.3.1.46</ecNumber>
    </recommendedName>
    <alternativeName>
        <fullName evidence="1">Homoserine transsuccinylase</fullName>
        <shortName evidence="1">HTS</shortName>
    </alternativeName>
</protein>
<feature type="chain" id="PRO_0000440355" description="Homoserine O-succinyltransferase">
    <location>
        <begin position="1"/>
        <end position="306"/>
    </location>
</feature>
<feature type="active site" description="Acyl-thioester intermediate" evidence="1">
    <location>
        <position position="142"/>
    </location>
</feature>
<feature type="active site" description="Proton acceptor" evidence="1">
    <location>
        <position position="233"/>
    </location>
</feature>
<feature type="active site" evidence="1">
    <location>
        <position position="235"/>
    </location>
</feature>
<feature type="binding site" evidence="1">
    <location>
        <position position="163"/>
    </location>
    <ligand>
        <name>substrate</name>
    </ligand>
</feature>
<feature type="binding site" evidence="1">
    <location>
        <position position="192"/>
    </location>
    <ligand>
        <name>substrate</name>
    </ligand>
</feature>
<feature type="binding site" evidence="1">
    <location>
        <position position="247"/>
    </location>
    <ligand>
        <name>substrate</name>
    </ligand>
</feature>
<feature type="site" description="Important for acyl-CoA specificity" evidence="1">
    <location>
        <position position="111"/>
    </location>
</feature>
<feature type="site" description="Important for substrate specificity" evidence="1">
    <location>
        <position position="192"/>
    </location>
</feature>
<comment type="function">
    <text evidence="1 2">Transfers a succinyl group from succinyl-CoA to L-homoserine, forming succinyl-L-homoserine.</text>
</comment>
<comment type="catalytic activity">
    <reaction evidence="1 2">
        <text>L-homoserine + succinyl-CoA = O-succinyl-L-homoserine + CoA</text>
        <dbReference type="Rhea" id="RHEA:22008"/>
        <dbReference type="ChEBI" id="CHEBI:57287"/>
        <dbReference type="ChEBI" id="CHEBI:57292"/>
        <dbReference type="ChEBI" id="CHEBI:57476"/>
        <dbReference type="ChEBI" id="CHEBI:57661"/>
        <dbReference type="EC" id="2.3.1.46"/>
    </reaction>
</comment>
<comment type="pathway">
    <text evidence="1">Amino-acid biosynthesis; L-methionine biosynthesis via de novo pathway; O-succinyl-L-homoserine from L-homoserine: step 1/1.</text>
</comment>
<comment type="subcellular location">
    <subcellularLocation>
        <location evidence="1">Cytoplasm</location>
    </subcellularLocation>
</comment>
<comment type="similarity">
    <text evidence="1">Belongs to the MetA family.</text>
</comment>
<evidence type="ECO:0000255" key="1">
    <source>
        <dbReference type="HAMAP-Rule" id="MF_00295"/>
    </source>
</evidence>
<evidence type="ECO:0000269" key="2">
    <source>
    </source>
</evidence>
<evidence type="ECO:0000303" key="3">
    <source>
    </source>
</evidence>
<evidence type="ECO:0000312" key="4">
    <source>
        <dbReference type="EMBL" id="AEQ51896.1"/>
    </source>
</evidence>
<dbReference type="EC" id="2.3.1.46" evidence="1 2"/>
<dbReference type="EMBL" id="CP003075">
    <property type="protein sequence ID" value="AEQ51896.1"/>
    <property type="molecule type" value="Genomic_DNA"/>
</dbReference>
<dbReference type="RefSeq" id="WP_014131045.1">
    <property type="nucleotide sequence ID" value="NC_016078.1"/>
</dbReference>
<dbReference type="SMR" id="G4RES5"/>
<dbReference type="STRING" id="1082931.KKY_1885"/>
<dbReference type="KEGG" id="phl:KKY_1885"/>
<dbReference type="PATRIC" id="fig|1082931.4.peg.1855"/>
<dbReference type="eggNOG" id="COG1897">
    <property type="taxonomic scope" value="Bacteria"/>
</dbReference>
<dbReference type="HOGENOM" id="CLU_057851_0_1_5"/>
<dbReference type="UniPathway" id="UPA00051">
    <property type="reaction ID" value="UER00075"/>
</dbReference>
<dbReference type="Proteomes" id="UP000008850">
    <property type="component" value="Chromosome"/>
</dbReference>
<dbReference type="GO" id="GO:0005737">
    <property type="term" value="C:cytoplasm"/>
    <property type="evidence" value="ECO:0007669"/>
    <property type="project" value="UniProtKB-SubCell"/>
</dbReference>
<dbReference type="GO" id="GO:0004414">
    <property type="term" value="F:homoserine O-acetyltransferase activity"/>
    <property type="evidence" value="ECO:0007669"/>
    <property type="project" value="UniProtKB-UniRule"/>
</dbReference>
<dbReference type="GO" id="GO:0008899">
    <property type="term" value="F:homoserine O-succinyltransferase activity"/>
    <property type="evidence" value="ECO:0007669"/>
    <property type="project" value="UniProtKB-EC"/>
</dbReference>
<dbReference type="GO" id="GO:0019281">
    <property type="term" value="P:L-methionine biosynthetic process from homoserine via O-succinyl-L-homoserine and cystathionine"/>
    <property type="evidence" value="ECO:0007669"/>
    <property type="project" value="InterPro"/>
</dbReference>
<dbReference type="CDD" id="cd03131">
    <property type="entry name" value="GATase1_HTS"/>
    <property type="match status" value="1"/>
</dbReference>
<dbReference type="Gene3D" id="3.40.50.880">
    <property type="match status" value="1"/>
</dbReference>
<dbReference type="HAMAP" id="MF_00295">
    <property type="entry name" value="MetA_acyltransf"/>
    <property type="match status" value="1"/>
</dbReference>
<dbReference type="InterPro" id="IPR029062">
    <property type="entry name" value="Class_I_gatase-like"/>
</dbReference>
<dbReference type="InterPro" id="IPR005697">
    <property type="entry name" value="HST_MetA"/>
</dbReference>
<dbReference type="InterPro" id="IPR033752">
    <property type="entry name" value="MetA_family"/>
</dbReference>
<dbReference type="NCBIfam" id="TIGR01001">
    <property type="entry name" value="metA"/>
    <property type="match status" value="1"/>
</dbReference>
<dbReference type="PANTHER" id="PTHR20919">
    <property type="entry name" value="HOMOSERINE O-SUCCINYLTRANSFERASE"/>
    <property type="match status" value="1"/>
</dbReference>
<dbReference type="PANTHER" id="PTHR20919:SF0">
    <property type="entry name" value="HOMOSERINE O-SUCCINYLTRANSFERASE"/>
    <property type="match status" value="1"/>
</dbReference>
<dbReference type="Pfam" id="PF04204">
    <property type="entry name" value="HTS"/>
    <property type="match status" value="1"/>
</dbReference>
<dbReference type="PIRSF" id="PIRSF000450">
    <property type="entry name" value="H_ser_succinyltr"/>
    <property type="match status" value="1"/>
</dbReference>
<dbReference type="SUPFAM" id="SSF52317">
    <property type="entry name" value="Class I glutamine amidotransferase-like"/>
    <property type="match status" value="1"/>
</dbReference>